<reference key="1">
    <citation type="journal article" date="2005" name="Science">
        <title>Life at depth: Photobacterium profundum genome sequence and expression analysis.</title>
        <authorList>
            <person name="Vezzi A."/>
            <person name="Campanaro S."/>
            <person name="D'Angelo M."/>
            <person name="Simonato F."/>
            <person name="Vitulo N."/>
            <person name="Lauro F.M."/>
            <person name="Cestaro A."/>
            <person name="Malacrida G."/>
            <person name="Simionati B."/>
            <person name="Cannata N."/>
            <person name="Romualdi C."/>
            <person name="Bartlett D.H."/>
            <person name="Valle G."/>
        </authorList>
    </citation>
    <scope>NUCLEOTIDE SEQUENCE [LARGE SCALE GENOMIC DNA]</scope>
    <source>
        <strain>ATCC BAA-1253 / SS9</strain>
    </source>
</reference>
<organism>
    <name type="scientific">Photobacterium profundum (strain SS9)</name>
    <dbReference type="NCBI Taxonomy" id="298386"/>
    <lineage>
        <taxon>Bacteria</taxon>
        <taxon>Pseudomonadati</taxon>
        <taxon>Pseudomonadota</taxon>
        <taxon>Gammaproteobacteria</taxon>
        <taxon>Vibrionales</taxon>
        <taxon>Vibrionaceae</taxon>
        <taxon>Photobacterium</taxon>
    </lineage>
</organism>
<gene>
    <name evidence="1" type="primary">glgC</name>
    <name type="ordered locus">PBPRB0405</name>
</gene>
<dbReference type="EC" id="2.7.7.27" evidence="1"/>
<dbReference type="EMBL" id="CR378676">
    <property type="protein sequence ID" value="CAG22278.1"/>
    <property type="molecule type" value="Genomic_DNA"/>
</dbReference>
<dbReference type="RefSeq" id="WP_011220489.1">
    <property type="nucleotide sequence ID" value="NC_006371.1"/>
</dbReference>
<dbReference type="SMR" id="Q6LKA2"/>
<dbReference type="STRING" id="298386.PBPRB0405"/>
<dbReference type="KEGG" id="ppr:PBPRB0405"/>
<dbReference type="eggNOG" id="COG0448">
    <property type="taxonomic scope" value="Bacteria"/>
</dbReference>
<dbReference type="HOGENOM" id="CLU_029499_14_1_6"/>
<dbReference type="UniPathway" id="UPA00164"/>
<dbReference type="Proteomes" id="UP000000593">
    <property type="component" value="Chromosome 2"/>
</dbReference>
<dbReference type="GO" id="GO:0005524">
    <property type="term" value="F:ATP binding"/>
    <property type="evidence" value="ECO:0007669"/>
    <property type="project" value="UniProtKB-KW"/>
</dbReference>
<dbReference type="GO" id="GO:0008878">
    <property type="term" value="F:glucose-1-phosphate adenylyltransferase activity"/>
    <property type="evidence" value="ECO:0007669"/>
    <property type="project" value="UniProtKB-UniRule"/>
</dbReference>
<dbReference type="GO" id="GO:0005978">
    <property type="term" value="P:glycogen biosynthetic process"/>
    <property type="evidence" value="ECO:0007669"/>
    <property type="project" value="UniProtKB-UniRule"/>
</dbReference>
<dbReference type="CDD" id="cd02508">
    <property type="entry name" value="ADP_Glucose_PP"/>
    <property type="match status" value="1"/>
</dbReference>
<dbReference type="CDD" id="cd04651">
    <property type="entry name" value="LbH_G1P_AT_C"/>
    <property type="match status" value="1"/>
</dbReference>
<dbReference type="Gene3D" id="2.160.10.10">
    <property type="entry name" value="Hexapeptide repeat proteins"/>
    <property type="match status" value="1"/>
</dbReference>
<dbReference type="Gene3D" id="3.90.550.10">
    <property type="entry name" value="Spore Coat Polysaccharide Biosynthesis Protein SpsA, Chain A"/>
    <property type="match status" value="1"/>
</dbReference>
<dbReference type="HAMAP" id="MF_00624">
    <property type="entry name" value="GlgC"/>
    <property type="match status" value="1"/>
</dbReference>
<dbReference type="InterPro" id="IPR011831">
    <property type="entry name" value="ADP-Glc_PPase"/>
</dbReference>
<dbReference type="InterPro" id="IPR005836">
    <property type="entry name" value="ADP_Glu_pyroP_CS"/>
</dbReference>
<dbReference type="InterPro" id="IPR023049">
    <property type="entry name" value="GlgC_bac"/>
</dbReference>
<dbReference type="InterPro" id="IPR056818">
    <property type="entry name" value="GlmU/GlgC-like_hexapep"/>
</dbReference>
<dbReference type="InterPro" id="IPR005835">
    <property type="entry name" value="NTP_transferase_dom"/>
</dbReference>
<dbReference type="InterPro" id="IPR029044">
    <property type="entry name" value="Nucleotide-diphossugar_trans"/>
</dbReference>
<dbReference type="InterPro" id="IPR011004">
    <property type="entry name" value="Trimer_LpxA-like_sf"/>
</dbReference>
<dbReference type="NCBIfam" id="TIGR02091">
    <property type="entry name" value="glgC"/>
    <property type="match status" value="1"/>
</dbReference>
<dbReference type="NCBIfam" id="NF001947">
    <property type="entry name" value="PRK00725.1"/>
    <property type="match status" value="1"/>
</dbReference>
<dbReference type="NCBIfam" id="NF002023">
    <property type="entry name" value="PRK00844.1"/>
    <property type="match status" value="1"/>
</dbReference>
<dbReference type="PANTHER" id="PTHR43523:SF2">
    <property type="entry name" value="GLUCOSE-1-PHOSPHATE ADENYLYLTRANSFERASE"/>
    <property type="match status" value="1"/>
</dbReference>
<dbReference type="PANTHER" id="PTHR43523">
    <property type="entry name" value="GLUCOSE-1-PHOSPHATE ADENYLYLTRANSFERASE-RELATED"/>
    <property type="match status" value="1"/>
</dbReference>
<dbReference type="Pfam" id="PF24894">
    <property type="entry name" value="Hexapep_GlmU"/>
    <property type="match status" value="1"/>
</dbReference>
<dbReference type="Pfam" id="PF00483">
    <property type="entry name" value="NTP_transferase"/>
    <property type="match status" value="1"/>
</dbReference>
<dbReference type="SUPFAM" id="SSF53448">
    <property type="entry name" value="Nucleotide-diphospho-sugar transferases"/>
    <property type="match status" value="1"/>
</dbReference>
<dbReference type="SUPFAM" id="SSF51161">
    <property type="entry name" value="Trimeric LpxA-like enzymes"/>
    <property type="match status" value="1"/>
</dbReference>
<dbReference type="PROSITE" id="PS00808">
    <property type="entry name" value="ADP_GLC_PYROPHOSPH_1"/>
    <property type="match status" value="1"/>
</dbReference>
<dbReference type="PROSITE" id="PS00809">
    <property type="entry name" value="ADP_GLC_PYROPHOSPH_2"/>
    <property type="match status" value="1"/>
</dbReference>
<dbReference type="PROSITE" id="PS00810">
    <property type="entry name" value="ADP_GLC_PYROPHOSPH_3"/>
    <property type="match status" value="1"/>
</dbReference>
<keyword id="KW-0067">ATP-binding</keyword>
<keyword id="KW-0119">Carbohydrate metabolism</keyword>
<keyword id="KW-0320">Glycogen biosynthesis</keyword>
<keyword id="KW-0321">Glycogen metabolism</keyword>
<keyword id="KW-0547">Nucleotide-binding</keyword>
<keyword id="KW-0548">Nucleotidyltransferase</keyword>
<keyword id="KW-1185">Reference proteome</keyword>
<keyword id="KW-0808">Transferase</keyword>
<sequence length="405" mass="45192">MGGVLGMILAGGEGSRLRPLTDSRTKPAVPFGGSYRLIDFALNNFVNADFLKIYVLTQFKSQSLYVHMKKGWNITGITDRFIDPIPAQMRMGKRWYDGTADAIYQNLSFIELAEPEHVCIFGSDHIYKMDIKQMLNFHKEKEAELTVSALRMPLSEASAFGVIEVDENGCMVGFEEKPTNPKSIPGDPENALVSMGNYIFNKDTLCTELEEDAAKEDSSHDFGKDIIPKLFPLGKVYVYDFTTNIIPGEKNTGYWRDVGTIEAYWQAHMDLLSEDAPFSLYNRQWQLHTHYPPLPPATILDSENSKVDINNCMISAGSYIRGAQIHKSILGFRTNVDHNTMISESVILGDVKIGANCSIRKAIIDKNVHIAPGTVIGENPEEDKKNYHVSDEGIVVIPKGAKIGY</sequence>
<proteinExistence type="inferred from homology"/>
<evidence type="ECO:0000255" key="1">
    <source>
        <dbReference type="HAMAP-Rule" id="MF_00624"/>
    </source>
</evidence>
<comment type="function">
    <text evidence="1">Involved in the biosynthesis of ADP-glucose, a building block required for the elongation reactions to produce glycogen. Catalyzes the reaction between ATP and alpha-D-glucose 1-phosphate (G1P) to produce pyrophosphate and ADP-Glc.</text>
</comment>
<comment type="catalytic activity">
    <reaction evidence="1">
        <text>alpha-D-glucose 1-phosphate + ATP + H(+) = ADP-alpha-D-glucose + diphosphate</text>
        <dbReference type="Rhea" id="RHEA:12120"/>
        <dbReference type="ChEBI" id="CHEBI:15378"/>
        <dbReference type="ChEBI" id="CHEBI:30616"/>
        <dbReference type="ChEBI" id="CHEBI:33019"/>
        <dbReference type="ChEBI" id="CHEBI:57498"/>
        <dbReference type="ChEBI" id="CHEBI:58601"/>
        <dbReference type="EC" id="2.7.7.27"/>
    </reaction>
</comment>
<comment type="pathway">
    <text evidence="1">Glycan biosynthesis; glycogen biosynthesis.</text>
</comment>
<comment type="subunit">
    <text evidence="1">Homotetramer.</text>
</comment>
<comment type="similarity">
    <text evidence="1">Belongs to the bacterial/plant glucose-1-phosphate adenylyltransferase family.</text>
</comment>
<name>GLGC_PHOPR</name>
<accession>Q6LKA2</accession>
<feature type="chain" id="PRO_0000195315" description="Glucose-1-phosphate adenylyltransferase">
    <location>
        <begin position="1"/>
        <end position="405"/>
    </location>
</feature>
<feature type="binding site" evidence="1">
    <location>
        <position position="96"/>
    </location>
    <ligand>
        <name>alpha-D-glucose 1-phosphate</name>
        <dbReference type="ChEBI" id="CHEBI:58601"/>
    </ligand>
</feature>
<feature type="binding site" evidence="1">
    <location>
        <position position="161"/>
    </location>
    <ligand>
        <name>alpha-D-glucose 1-phosphate</name>
        <dbReference type="ChEBI" id="CHEBI:58601"/>
    </ligand>
</feature>
<feature type="binding site" evidence="1">
    <location>
        <begin position="176"/>
        <end position="177"/>
    </location>
    <ligand>
        <name>alpha-D-glucose 1-phosphate</name>
        <dbReference type="ChEBI" id="CHEBI:58601"/>
    </ligand>
</feature>
<feature type="binding site" evidence="1">
    <location>
        <position position="194"/>
    </location>
    <ligand>
        <name>alpha-D-glucose 1-phosphate</name>
        <dbReference type="ChEBI" id="CHEBI:58601"/>
    </ligand>
</feature>
<protein>
    <recommendedName>
        <fullName evidence="1">Glucose-1-phosphate adenylyltransferase</fullName>
        <ecNumber evidence="1">2.7.7.27</ecNumber>
    </recommendedName>
    <alternativeName>
        <fullName evidence="1">ADP-glucose pyrophosphorylase</fullName>
        <shortName evidence="1">ADPGlc PPase</shortName>
    </alternativeName>
    <alternativeName>
        <fullName evidence="1">ADP-glucose synthase</fullName>
    </alternativeName>
</protein>